<keyword id="KW-0067">ATP-binding</keyword>
<keyword id="KW-0143">Chaperone</keyword>
<keyword id="KW-0963">Cytoplasm</keyword>
<keyword id="KW-0413">Isomerase</keyword>
<keyword id="KW-0547">Nucleotide-binding</keyword>
<keyword id="KW-1185">Reference proteome</keyword>
<sequence>MAAKDVKFGNDARVKMLRGVNVLADAVKVTLGPKGRNVVLDKSFGAPTITKDGVSVAREIELEDKFENMGAQMVKEVASKANDAAGDGTTTATVLAQAIITEGLKAVAAGMNPMDLKRGIDKAVTAAVEELKALSVPCSDSKAIAQVGTISANSDETVGKLIAEAMDKVGKEGVITVEDGTGLQDELDVVEGMQFDRGYLSPYFINKPETGAVELESPFILLADKKISNIREMLPVLEAVAKAGKPLLIIAEDVEGEALATLVVNTMRGIVKVAAVKAPGFGDRRKAMLQDIATLTGGTVISEEIGMELEKATLEDLGQAKRVVINKDTTTIIDGVGEEAAIQGRVAQIRQQIEEATSDYDREKLQERVAKLAGGVAVIKVGAATEVEMKEKKARVEDALHATRAAVEEGVVAGGGVALIRVASKLADLRGQNEDQNVGIKVALRAMEAPLRQIVLNCGEEPSVVANTVKGGDGNYGYNAATEEYGNMIDMGILDPTKVTRSALQYAASVAGLMITTECMVTDLPKNDAADLGAAGGMGGMGGMGGMM</sequence>
<reference key="1">
    <citation type="journal article" date="2001" name="Nature">
        <title>Genome sequence of enterohaemorrhagic Escherichia coli O157:H7.</title>
        <authorList>
            <person name="Perna N.T."/>
            <person name="Plunkett G. III"/>
            <person name="Burland V."/>
            <person name="Mau B."/>
            <person name="Glasner J.D."/>
            <person name="Rose D.J."/>
            <person name="Mayhew G.F."/>
            <person name="Evans P.S."/>
            <person name="Gregor J."/>
            <person name="Kirkpatrick H.A."/>
            <person name="Posfai G."/>
            <person name="Hackett J."/>
            <person name="Klink S."/>
            <person name="Boutin A."/>
            <person name="Shao Y."/>
            <person name="Miller L."/>
            <person name="Grotbeck E.J."/>
            <person name="Davis N.W."/>
            <person name="Lim A."/>
            <person name="Dimalanta E.T."/>
            <person name="Potamousis K."/>
            <person name="Apodaca J."/>
            <person name="Anantharaman T.S."/>
            <person name="Lin J."/>
            <person name="Yen G."/>
            <person name="Schwartz D.C."/>
            <person name="Welch R.A."/>
            <person name="Blattner F.R."/>
        </authorList>
    </citation>
    <scope>NUCLEOTIDE SEQUENCE [LARGE SCALE GENOMIC DNA]</scope>
    <source>
        <strain>O157:H7 / EDL933 / ATCC 700927 / EHEC</strain>
    </source>
</reference>
<reference key="2">
    <citation type="journal article" date="2001" name="DNA Res.">
        <title>Complete genome sequence of enterohemorrhagic Escherichia coli O157:H7 and genomic comparison with a laboratory strain K-12.</title>
        <authorList>
            <person name="Hayashi T."/>
            <person name="Makino K."/>
            <person name="Ohnishi M."/>
            <person name="Kurokawa K."/>
            <person name="Ishii K."/>
            <person name="Yokoyama K."/>
            <person name="Han C.-G."/>
            <person name="Ohtsubo E."/>
            <person name="Nakayama K."/>
            <person name="Murata T."/>
            <person name="Tanaka M."/>
            <person name="Tobe T."/>
            <person name="Iida T."/>
            <person name="Takami H."/>
            <person name="Honda T."/>
            <person name="Sasakawa C."/>
            <person name="Ogasawara N."/>
            <person name="Yasunaga T."/>
            <person name="Kuhara S."/>
            <person name="Shiba T."/>
            <person name="Hattori M."/>
            <person name="Shinagawa H."/>
        </authorList>
    </citation>
    <scope>NUCLEOTIDE SEQUENCE [LARGE SCALE GENOMIC DNA]</scope>
    <source>
        <strain>O157:H7 / Sakai / RIMD 0509952 / EHEC</strain>
    </source>
</reference>
<dbReference type="EC" id="5.6.1.7" evidence="2"/>
<dbReference type="EMBL" id="AE005174">
    <property type="protein sequence ID" value="AAG59342.1"/>
    <property type="molecule type" value="Genomic_DNA"/>
</dbReference>
<dbReference type="EMBL" id="BA000007">
    <property type="protein sequence ID" value="BAB38547.1"/>
    <property type="molecule type" value="Genomic_DNA"/>
</dbReference>
<dbReference type="PIR" id="D91269">
    <property type="entry name" value="D91269"/>
</dbReference>
<dbReference type="RefSeq" id="NP_313151.1">
    <property type="nucleotide sequence ID" value="NC_002695.1"/>
</dbReference>
<dbReference type="RefSeq" id="WP_000729117.1">
    <property type="nucleotide sequence ID" value="NZ_VOAI01000008.1"/>
</dbReference>
<dbReference type="SMR" id="P0A6F7"/>
<dbReference type="IntAct" id="P0A6F7">
    <property type="interactions" value="1"/>
</dbReference>
<dbReference type="STRING" id="155864.Z5748"/>
<dbReference type="GeneID" id="913705"/>
<dbReference type="GeneID" id="93777681"/>
<dbReference type="KEGG" id="ece:Z5748"/>
<dbReference type="KEGG" id="ecs:ECs_5124"/>
<dbReference type="PATRIC" id="fig|386585.9.peg.5355"/>
<dbReference type="eggNOG" id="COG0459">
    <property type="taxonomic scope" value="Bacteria"/>
</dbReference>
<dbReference type="HOGENOM" id="CLU_016503_3_0_6"/>
<dbReference type="OMA" id="TDTDKME"/>
<dbReference type="Proteomes" id="UP000000558">
    <property type="component" value="Chromosome"/>
</dbReference>
<dbReference type="Proteomes" id="UP000002519">
    <property type="component" value="Chromosome"/>
</dbReference>
<dbReference type="GO" id="GO:0005737">
    <property type="term" value="C:cytoplasm"/>
    <property type="evidence" value="ECO:0007669"/>
    <property type="project" value="UniProtKB-SubCell"/>
</dbReference>
<dbReference type="GO" id="GO:0005524">
    <property type="term" value="F:ATP binding"/>
    <property type="evidence" value="ECO:0007669"/>
    <property type="project" value="UniProtKB-UniRule"/>
</dbReference>
<dbReference type="GO" id="GO:0140662">
    <property type="term" value="F:ATP-dependent protein folding chaperone"/>
    <property type="evidence" value="ECO:0007669"/>
    <property type="project" value="InterPro"/>
</dbReference>
<dbReference type="GO" id="GO:0016853">
    <property type="term" value="F:isomerase activity"/>
    <property type="evidence" value="ECO:0007669"/>
    <property type="project" value="UniProtKB-KW"/>
</dbReference>
<dbReference type="GO" id="GO:0051082">
    <property type="term" value="F:unfolded protein binding"/>
    <property type="evidence" value="ECO:0007669"/>
    <property type="project" value="UniProtKB-UniRule"/>
</dbReference>
<dbReference type="GO" id="GO:0042026">
    <property type="term" value="P:protein refolding"/>
    <property type="evidence" value="ECO:0007669"/>
    <property type="project" value="UniProtKB-UniRule"/>
</dbReference>
<dbReference type="CDD" id="cd03344">
    <property type="entry name" value="GroEL"/>
    <property type="match status" value="1"/>
</dbReference>
<dbReference type="FunFam" id="1.10.560.10:FF:000001">
    <property type="entry name" value="60 kDa chaperonin"/>
    <property type="match status" value="1"/>
</dbReference>
<dbReference type="FunFam" id="3.50.7.10:FF:000001">
    <property type="entry name" value="60 kDa chaperonin"/>
    <property type="match status" value="1"/>
</dbReference>
<dbReference type="Gene3D" id="3.50.7.10">
    <property type="entry name" value="GroEL"/>
    <property type="match status" value="1"/>
</dbReference>
<dbReference type="Gene3D" id="1.10.560.10">
    <property type="entry name" value="GroEL-like equatorial domain"/>
    <property type="match status" value="1"/>
</dbReference>
<dbReference type="Gene3D" id="3.30.260.10">
    <property type="entry name" value="TCP-1-like chaperonin intermediate domain"/>
    <property type="match status" value="1"/>
</dbReference>
<dbReference type="HAMAP" id="MF_00600">
    <property type="entry name" value="CH60"/>
    <property type="match status" value="1"/>
</dbReference>
<dbReference type="InterPro" id="IPR018370">
    <property type="entry name" value="Chaperonin_Cpn60_CS"/>
</dbReference>
<dbReference type="InterPro" id="IPR001844">
    <property type="entry name" value="Cpn60/GroEL"/>
</dbReference>
<dbReference type="InterPro" id="IPR002423">
    <property type="entry name" value="Cpn60/GroEL/TCP-1"/>
</dbReference>
<dbReference type="InterPro" id="IPR027409">
    <property type="entry name" value="GroEL-like_apical_dom_sf"/>
</dbReference>
<dbReference type="InterPro" id="IPR027413">
    <property type="entry name" value="GROEL-like_equatorial_sf"/>
</dbReference>
<dbReference type="InterPro" id="IPR027410">
    <property type="entry name" value="TCP-1-like_intermed_sf"/>
</dbReference>
<dbReference type="NCBIfam" id="TIGR02348">
    <property type="entry name" value="GroEL"/>
    <property type="match status" value="1"/>
</dbReference>
<dbReference type="NCBIfam" id="NF000592">
    <property type="entry name" value="PRK00013.1"/>
    <property type="match status" value="1"/>
</dbReference>
<dbReference type="NCBIfam" id="NF009487">
    <property type="entry name" value="PRK12849.1"/>
    <property type="match status" value="1"/>
</dbReference>
<dbReference type="NCBIfam" id="NF009488">
    <property type="entry name" value="PRK12850.1"/>
    <property type="match status" value="1"/>
</dbReference>
<dbReference type="NCBIfam" id="NF009489">
    <property type="entry name" value="PRK12851.1"/>
    <property type="match status" value="1"/>
</dbReference>
<dbReference type="PANTHER" id="PTHR45633">
    <property type="entry name" value="60 KDA HEAT SHOCK PROTEIN, MITOCHONDRIAL"/>
    <property type="match status" value="1"/>
</dbReference>
<dbReference type="Pfam" id="PF00118">
    <property type="entry name" value="Cpn60_TCP1"/>
    <property type="match status" value="1"/>
</dbReference>
<dbReference type="PRINTS" id="PR00298">
    <property type="entry name" value="CHAPERONIN60"/>
</dbReference>
<dbReference type="SUPFAM" id="SSF52029">
    <property type="entry name" value="GroEL apical domain-like"/>
    <property type="match status" value="1"/>
</dbReference>
<dbReference type="SUPFAM" id="SSF48592">
    <property type="entry name" value="GroEL equatorial domain-like"/>
    <property type="match status" value="1"/>
</dbReference>
<dbReference type="SUPFAM" id="SSF54849">
    <property type="entry name" value="GroEL-intermediate domain like"/>
    <property type="match status" value="1"/>
</dbReference>
<dbReference type="PROSITE" id="PS00296">
    <property type="entry name" value="CHAPERONINS_CPN60"/>
    <property type="match status" value="1"/>
</dbReference>
<protein>
    <recommendedName>
        <fullName evidence="2">Chaperonin GroEL</fullName>
        <ecNumber evidence="2">5.6.1.7</ecNumber>
    </recommendedName>
    <alternativeName>
        <fullName evidence="2">60 kDa chaperonin</fullName>
    </alternativeName>
    <alternativeName>
        <fullName evidence="2">Chaperonin-60</fullName>
        <shortName evidence="2">Cpn60</shortName>
    </alternativeName>
</protein>
<evidence type="ECO:0000250" key="1"/>
<evidence type="ECO:0000255" key="2">
    <source>
        <dbReference type="HAMAP-Rule" id="MF_00600"/>
    </source>
</evidence>
<comment type="function">
    <text evidence="2">Together with its co-chaperonin GroES, plays an essential role in assisting protein folding. The GroEL-GroES system forms a nano-cage that allows encapsulation of the non-native substrate proteins and provides a physical environment optimized to promote and accelerate protein folding.</text>
</comment>
<comment type="catalytic activity">
    <reaction evidence="2">
        <text>ATP + H2O + a folded polypeptide = ADP + phosphate + an unfolded polypeptide.</text>
        <dbReference type="EC" id="5.6.1.7"/>
    </reaction>
</comment>
<comment type="subunit">
    <text evidence="2">Forms a cylinder of 14 subunits composed of two heptameric rings stacked back-to-back. Interacts with the co-chaperonin GroES.</text>
</comment>
<comment type="subcellular location">
    <subcellularLocation>
        <location evidence="2">Cytoplasm</location>
    </subcellularLocation>
</comment>
<comment type="similarity">
    <text evidence="2">Belongs to the chaperonin (HSP60) family.</text>
</comment>
<accession>P0A6F7</accession>
<accession>P06139</accession>
<organism>
    <name type="scientific">Escherichia coli O157:H7</name>
    <dbReference type="NCBI Taxonomy" id="83334"/>
    <lineage>
        <taxon>Bacteria</taxon>
        <taxon>Pseudomonadati</taxon>
        <taxon>Pseudomonadota</taxon>
        <taxon>Gammaproteobacteria</taxon>
        <taxon>Enterobacterales</taxon>
        <taxon>Enterobacteriaceae</taxon>
        <taxon>Escherichia</taxon>
    </lineage>
</organism>
<proteinExistence type="inferred from homology"/>
<feature type="initiator methionine" description="Removed" evidence="1">
    <location>
        <position position="1"/>
    </location>
</feature>
<feature type="chain" id="PRO_0000063360" description="Chaperonin GroEL">
    <location>
        <begin position="2"/>
        <end position="548"/>
    </location>
</feature>
<feature type="binding site" evidence="2">
    <location>
        <begin position="30"/>
        <end position="33"/>
    </location>
    <ligand>
        <name>ATP</name>
        <dbReference type="ChEBI" id="CHEBI:30616"/>
    </ligand>
</feature>
<feature type="binding site" evidence="2">
    <location>
        <position position="51"/>
    </location>
    <ligand>
        <name>ATP</name>
        <dbReference type="ChEBI" id="CHEBI:30616"/>
    </ligand>
</feature>
<feature type="binding site" evidence="2">
    <location>
        <begin position="87"/>
        <end position="91"/>
    </location>
    <ligand>
        <name>ATP</name>
        <dbReference type="ChEBI" id="CHEBI:30616"/>
    </ligand>
</feature>
<feature type="binding site" evidence="2">
    <location>
        <position position="415"/>
    </location>
    <ligand>
        <name>ATP</name>
        <dbReference type="ChEBI" id="CHEBI:30616"/>
    </ligand>
</feature>
<feature type="binding site" evidence="2">
    <location>
        <begin position="479"/>
        <end position="481"/>
    </location>
    <ligand>
        <name>ATP</name>
        <dbReference type="ChEBI" id="CHEBI:30616"/>
    </ligand>
</feature>
<feature type="binding site" evidence="2">
    <location>
        <position position="495"/>
    </location>
    <ligand>
        <name>ATP</name>
        <dbReference type="ChEBI" id="CHEBI:30616"/>
    </ligand>
</feature>
<name>CH60_ECO57</name>
<gene>
    <name evidence="2" type="primary">groEL</name>
    <name evidence="2" type="synonym">groL</name>
    <name type="synonym">mopA</name>
    <name type="ordered locus">Z5748</name>
    <name type="ordered locus">ECs5124</name>
</gene>